<comment type="function">
    <text evidence="5">Seems to be involved in modulation of pathogen defense and leaf cell death. Down-regulates broad spectrum resistance to powdery mildew fungus and its defense suppression activity is enhanced by Ca(2+)-dependent calmodulin binding. Signaling seems not to require heterotrimeric G proteins.</text>
</comment>
<comment type="subcellular location">
    <subcellularLocation>
        <location evidence="3">Membrane</location>
        <topology evidence="3">Multi-pass membrane protein</topology>
    </subcellularLocation>
</comment>
<comment type="induction">
    <text evidence="5">By fungal infection and abiotic stress.</text>
</comment>
<comment type="domain">
    <text>The C-terminus contains a calmodulin-binding domain, which binds calmodulin in a calcium-dependent fashion.</text>
</comment>
<comment type="miscellaneous">
    <text>Mutations in the MLO gene confer broad spectrum resistance to the powdery mildew fungus and a enhanced susceptibility to fungal pathogens Magnaporthe grisea and Bipolaris sorokiniana.</text>
</comment>
<comment type="similarity">
    <text evidence="6">Belongs to the MLO family.</text>
</comment>
<feature type="chain" id="PRO_0000209928" description="Protein MLO">
    <location>
        <begin position="1"/>
        <end position="533"/>
    </location>
</feature>
<feature type="topological domain" description="Extracellular" evidence="1">
    <location>
        <begin position="1"/>
        <end position="17"/>
    </location>
</feature>
<feature type="transmembrane region" description="Helical; Name=1" evidence="1">
    <location>
        <begin position="18"/>
        <end position="38"/>
    </location>
</feature>
<feature type="topological domain" description="Cytoplasmic" evidence="1">
    <location>
        <begin position="39"/>
        <end position="62"/>
    </location>
</feature>
<feature type="transmembrane region" description="Helical; Name=2" evidence="1">
    <location>
        <begin position="63"/>
        <end position="83"/>
    </location>
</feature>
<feature type="topological domain" description="Extracellular" evidence="1">
    <location>
        <begin position="84"/>
        <end position="131"/>
    </location>
</feature>
<feature type="transmembrane region" description="Helical; Name=3" evidence="1">
    <location>
        <begin position="132"/>
        <end position="152"/>
    </location>
</feature>
<feature type="topological domain" description="Cytoplasmic" evidence="1">
    <location>
        <begin position="153"/>
        <end position="251"/>
    </location>
</feature>
<feature type="transmembrane region" description="Helical; Name=4" evidence="1">
    <location>
        <begin position="252"/>
        <end position="272"/>
    </location>
</feature>
<feature type="topological domain" description="Extracellular" evidence="1">
    <location>
        <position position="273"/>
    </location>
</feature>
<feature type="transmembrane region" description="Helical; Name=5" evidence="1">
    <location>
        <begin position="274"/>
        <end position="294"/>
    </location>
</feature>
<feature type="topological domain" description="Cytoplasmic" evidence="1">
    <location>
        <begin position="295"/>
        <end position="335"/>
    </location>
</feature>
<feature type="transmembrane region" description="Helical; Name=6" evidence="1">
    <location>
        <begin position="336"/>
        <end position="356"/>
    </location>
</feature>
<feature type="topological domain" description="Extracellular" evidence="1">
    <location>
        <begin position="357"/>
        <end position="379"/>
    </location>
</feature>
<feature type="transmembrane region" description="Helical; Name=7" evidence="1">
    <location>
        <begin position="380"/>
        <end position="400"/>
    </location>
</feature>
<feature type="topological domain" description="Cytoplasmic" evidence="1">
    <location>
        <begin position="401"/>
        <end position="533"/>
    </location>
</feature>
<feature type="region of interest" description="Calmodulin-binding">
    <location>
        <begin position="414"/>
        <end position="435"/>
    </location>
</feature>
<feature type="region of interest" description="Disordered" evidence="2">
    <location>
        <begin position="446"/>
        <end position="533"/>
    </location>
</feature>
<feature type="compositionally biased region" description="Low complexity" evidence="2">
    <location>
        <begin position="449"/>
        <end position="463"/>
    </location>
</feature>
<feature type="compositionally biased region" description="Polar residues" evidence="2">
    <location>
        <begin position="477"/>
        <end position="487"/>
    </location>
</feature>
<feature type="mutagenesis site" description="In mlo-9; confers broad spectrum resistance to powdery mildew fungus.">
    <original>R</original>
    <variation>W</variation>
    <location>
        <position position="10"/>
    </location>
</feature>
<feature type="mutagenesis site" description="In mlo-13; confers broad spectrum resistance to powdery mildew fungus.">
    <original>V</original>
    <variation>E</variation>
    <location>
        <position position="30"/>
    </location>
</feature>
<feature type="mutagenesis site" description="In mlo-17; confers broad spectrum resistance to powdery mildew fungus.">
    <original>S</original>
    <variation>F</variation>
    <location>
        <position position="31"/>
    </location>
</feature>
<feature type="mutagenesis site" description="In mlo-1; confers broad spectrum resistance to powdery mildew fungus.">
    <original>W</original>
    <variation>R</variation>
    <location>
        <position position="162"/>
    </location>
</feature>
<feature type="mutagenesis site" description="In mlo-10; confers broad spectrum resistance to powdery mildew fungus.">
    <location>
        <begin position="182"/>
        <end position="183"/>
    </location>
</feature>
<feature type="mutagenesis site" description="In mlo-28; confers partial resistance to powdery mildew fungus.">
    <original>T</original>
    <variation>I</variation>
    <location>
        <position position="222"/>
    </location>
</feature>
<feature type="mutagenesis site" description="In mlo-7; confers broad spectrum resistance to powdery mildew fungus.">
    <original>G</original>
    <variation>D</variation>
    <location>
        <position position="226"/>
    </location>
</feature>
<feature type="mutagenesis site" description="In mlo-12; confers partial resistance to powdery mildew fungus.">
    <original>F</original>
    <variation>L</variation>
    <location>
        <position position="240"/>
    </location>
</feature>
<feature type="mutagenesis site" description="In mlo-26; confers broad spectrum resistance to powdery mildew fungus.">
    <original>L</original>
    <variation>H</variation>
    <location>
        <position position="270"/>
    </location>
</feature>
<feature type="mutagenesis site" description="In mlo-27; confers broad spectrum resistance to powdery mildew fungus.">
    <original>G</original>
    <variation>E</variation>
    <location>
        <position position="318"/>
    </location>
</feature>
<feature type="mutagenesis site" description="In mlo-29; confers broad spectrum resistance to powdery mildew fungus.">
    <original>P</original>
    <variation>L</variation>
    <location>
        <position position="334"/>
    </location>
</feature>
<feature type="mutagenesis site" description="In mlo-30; confers broad spectrum resistance to powdery mildew fungus.">
    <location>
        <begin position="403"/>
        <end position="408"/>
    </location>
</feature>
<feature type="mutagenesis site" description="Diminishes binding to calmodulin and reduces susceptibility to powdery mildew fungus." evidence="4">
    <original>L</original>
    <variation>R</variation>
    <location>
        <position position="420"/>
    </location>
</feature>
<feature type="mutagenesis site" description="Diminishes binding to calmodulin and reduces susceptibility to powdery mildew fungus." evidence="4">
    <original>W</original>
    <variation>R</variation>
    <location>
        <position position="423"/>
    </location>
</feature>
<gene>
    <name type="primary">MLO</name>
</gene>
<evidence type="ECO:0000255" key="1"/>
<evidence type="ECO:0000256" key="2">
    <source>
        <dbReference type="SAM" id="MobiDB-lite"/>
    </source>
</evidence>
<evidence type="ECO:0000269" key="3">
    <source>
    </source>
</evidence>
<evidence type="ECO:0000269" key="4">
    <source>
    </source>
</evidence>
<evidence type="ECO:0000269" key="5">
    <source>
    </source>
</evidence>
<evidence type="ECO:0000305" key="6"/>
<sequence>MSDKKGVPARELPETPSWAVAVVFAAMVLVSVLMEHGLHKLGHWFQHRHKKALWEALEKMKAELMLVGFISLLLIVTQDPIIAKICISEDAADVMWPCKRGTEGRKPSKYVDYCPEGKVALMSTGSLHQLHVFIFVLAVFHVTYSVITIALSRLKMRTWKKWETETTSLEYQFANDPARFRFTHQTSFVKRHLGLSSTPGIRWVVAFFRQFFRSVTKVDYLTLRAGFINAHLSQNSKFDFHKYIKRSMEDDFKVVVGISLPLWGVAILTLFLDINGVGTLIWISFIPLVILLCVGTKLEMIIMEMALEIQDRASVIKGAPVVEPSNKFFWFHRPDWVLFFIHLTLFQNAFQMAHFVWTVATPGLKKCYHTQIGLSIMKVVVGLALQFLCSYMTFPLYALVTQMGSNMKRSIFDEQTSKALTNWRNTAKEKKKVRDTDMLMAQMIGDATPSRGSSPMPSRGSSPVHLLHKGMGRSDDPQSAPTSPRTQQEARDMYPVVVAHPVHRLNPNDRRRSASSSALEADIPSADFSFSQG</sequence>
<keyword id="KW-0112">Calmodulin-binding</keyword>
<keyword id="KW-0472">Membrane</keyword>
<keyword id="KW-0568">Pathogenesis-related protein</keyword>
<keyword id="KW-0611">Plant defense</keyword>
<keyword id="KW-0812">Transmembrane</keyword>
<keyword id="KW-1133">Transmembrane helix</keyword>
<protein>
    <recommendedName>
        <fullName>Protein MLO</fullName>
    </recommendedName>
</protein>
<proteinExistence type="evidence at protein level"/>
<reference key="1">
    <citation type="journal article" date="1997" name="Cell">
        <title>The barley Mlo gene: a novel control element of plant pathogen resistance.</title>
        <authorList>
            <person name="Bueschges R."/>
            <person name="Hollricher K."/>
            <person name="Panstruga R."/>
            <person name="Simons G."/>
            <person name="Wolter M."/>
            <person name="Frijters A."/>
            <person name="van Daelen R."/>
            <person name="van der Lee T."/>
            <person name="Diergaarde P."/>
            <person name="Groenendijk J."/>
            <person name="Toepsch S."/>
            <person name="Vos P."/>
            <person name="Salamini F."/>
            <person name="Schulze-Lefert P."/>
        </authorList>
    </citation>
    <scope>NUCLEOTIDE SEQUENCE [MRNA]</scope>
    <scope>MUTANTS MLO-1; MLO-7; MLO-9; MLO-10; MLO-13; MLO-17 AND MLO-26</scope>
    <source>
        <strain>cv. Carlsberg II</strain>
        <strain>cv. Diamant</strain>
        <strain>cv. Foma</strain>
        <strain>cv. Haisa</strain>
        <strain>cv. Ingrid</strain>
        <strain>cv. Malteria Heda</strain>
        <strain>cv. Plena</strain>
        <tissue>Leaf</tissue>
    </source>
</reference>
<reference key="2">
    <citation type="journal article" date="1998" name="Nucleic Acids Res.">
        <title>A contiguous 60 kb genomic stretch from barley reveals molecular evidence for gene islands in a monocot genome.</title>
        <authorList>
            <person name="Panstruga R."/>
            <person name="Buschges R."/>
            <person name="Piffanelli P."/>
            <person name="Schulze-Lefert P."/>
        </authorList>
    </citation>
    <scope>NUCLEOTIDE SEQUENCE [GENOMIC DNA]</scope>
    <source>
        <strain>cv. Ingrid</strain>
    </source>
</reference>
<reference key="3">
    <citation type="journal article" date="1999" name="J. Biol. Chem.">
        <title>Topology, subcellular localization, and sequence diversity of the Mlo family in plants.</title>
        <authorList>
            <person name="Devoto A."/>
            <person name="Piffanelli P."/>
            <person name="Nilsson I."/>
            <person name="Wallin E."/>
            <person name="Panstruga R."/>
            <person name="von Heijne G."/>
            <person name="Schulze-Lefert P."/>
        </authorList>
    </citation>
    <scope>SUBCELLULAR LOCATION</scope>
    <source>
        <strain>cv. Ingrid</strain>
    </source>
</reference>
<reference key="4">
    <citation type="journal article" date="2002" name="Nature">
        <title>Calmodulin interacts with MLO protein to regulate defence against mildew in barley.</title>
        <authorList>
            <person name="Kim M.C."/>
            <person name="Panstruga R."/>
            <person name="Elliott C."/>
            <person name="Mueller J."/>
            <person name="Devoto A."/>
            <person name="Yoon H.W."/>
            <person name="Park H.C."/>
            <person name="Cho M.J."/>
            <person name="Schulze-Lefert P."/>
        </authorList>
    </citation>
    <scope>INTERACTION WITH CALMODULIN</scope>
    <scope>MUTAGENESIS OF LEU-420 AND TRP-423</scope>
</reference>
<reference key="5">
    <citation type="journal article" date="2002" name="Plant Physiol.">
        <title>The barley MLO modulator of defense and cell death is responsive to biotic and abiotic stress stimuli.</title>
        <authorList>
            <person name="Piffanelli P."/>
            <person name="Zhou F."/>
            <person name="Casais C."/>
            <person name="Orme J."/>
            <person name="Jarosch B."/>
            <person name="Schaffrath U."/>
            <person name="Collins N.C."/>
            <person name="Panstruga R."/>
            <person name="Schulze-Lefert P."/>
        </authorList>
    </citation>
    <scope>FUNCTION</scope>
    <scope>INDUCTION</scope>
    <scope>MUTANTS MLO-12; MLO-27; MLO-28; MLO-29 AND MLO-30</scope>
</reference>
<name>MLO_HORVU</name>
<accession>P93766</accession>
<organism>
    <name type="scientific">Hordeum vulgare</name>
    <name type="common">Barley</name>
    <dbReference type="NCBI Taxonomy" id="4513"/>
    <lineage>
        <taxon>Eukaryota</taxon>
        <taxon>Viridiplantae</taxon>
        <taxon>Streptophyta</taxon>
        <taxon>Embryophyta</taxon>
        <taxon>Tracheophyta</taxon>
        <taxon>Spermatophyta</taxon>
        <taxon>Magnoliopsida</taxon>
        <taxon>Liliopsida</taxon>
        <taxon>Poales</taxon>
        <taxon>Poaceae</taxon>
        <taxon>BOP clade</taxon>
        <taxon>Pooideae</taxon>
        <taxon>Triticodae</taxon>
        <taxon>Triticeae</taxon>
        <taxon>Hordeinae</taxon>
        <taxon>Hordeum</taxon>
    </lineage>
</organism>
<dbReference type="EMBL" id="Z83834">
    <property type="protein sequence ID" value="CAB06083.1"/>
    <property type="molecule type" value="mRNA"/>
</dbReference>
<dbReference type="EMBL" id="Y14573">
    <property type="protein sequence ID" value="CAA74909.1"/>
    <property type="molecule type" value="Genomic_DNA"/>
</dbReference>
<dbReference type="PIR" id="T04481">
    <property type="entry name" value="T04481"/>
</dbReference>
<dbReference type="SMR" id="P93766"/>
<dbReference type="TCDB" id="1.A.130.1.11">
    <property type="family name" value="the mildew-resistance locus o (mlo) family"/>
</dbReference>
<dbReference type="OMA" id="GSTHELN"/>
<dbReference type="ExpressionAtlas" id="P93766">
    <property type="expression patterns" value="differential"/>
</dbReference>
<dbReference type="GO" id="GO:0016020">
    <property type="term" value="C:membrane"/>
    <property type="evidence" value="ECO:0007669"/>
    <property type="project" value="UniProtKB-SubCell"/>
</dbReference>
<dbReference type="GO" id="GO:0005516">
    <property type="term" value="F:calmodulin binding"/>
    <property type="evidence" value="ECO:0007669"/>
    <property type="project" value="UniProtKB-KW"/>
</dbReference>
<dbReference type="GO" id="GO:0006952">
    <property type="term" value="P:defense response"/>
    <property type="evidence" value="ECO:0007669"/>
    <property type="project" value="UniProtKB-KW"/>
</dbReference>
<dbReference type="InterPro" id="IPR004326">
    <property type="entry name" value="Mlo"/>
</dbReference>
<dbReference type="PANTHER" id="PTHR31942:SF82">
    <property type="entry name" value="MLO PROTEIN HOMOLOG 1"/>
    <property type="match status" value="1"/>
</dbReference>
<dbReference type="PANTHER" id="PTHR31942">
    <property type="entry name" value="MLO-LIKE PROTEIN 1"/>
    <property type="match status" value="1"/>
</dbReference>
<dbReference type="Pfam" id="PF03094">
    <property type="entry name" value="Mlo"/>
    <property type="match status" value="2"/>
</dbReference>